<feature type="chain" id="PRO_0000070566" description="UPF0210 protein MM_0081">
    <location>
        <begin position="1"/>
        <end position="453"/>
    </location>
</feature>
<gene>
    <name type="ordered locus">MM_0081</name>
</gene>
<dbReference type="EMBL" id="AE008384">
    <property type="protein sequence ID" value="AAM29777.1"/>
    <property type="molecule type" value="Genomic_DNA"/>
</dbReference>
<dbReference type="RefSeq" id="WP_011032035.1">
    <property type="nucleotide sequence ID" value="NC_003901.1"/>
</dbReference>
<dbReference type="SMR" id="Q8Q0Q5"/>
<dbReference type="KEGG" id="mma:MM_0081"/>
<dbReference type="PATRIC" id="fig|192952.21.peg.94"/>
<dbReference type="eggNOG" id="arCOG04321">
    <property type="taxonomic scope" value="Archaea"/>
</dbReference>
<dbReference type="HOGENOM" id="CLU_048704_0_0_2"/>
<dbReference type="Proteomes" id="UP000000595">
    <property type="component" value="Chromosome"/>
</dbReference>
<dbReference type="CDD" id="cd08025">
    <property type="entry name" value="RNR_PFL_like_DUF711"/>
    <property type="match status" value="1"/>
</dbReference>
<dbReference type="Gene3D" id="3.20.70.20">
    <property type="match status" value="1"/>
</dbReference>
<dbReference type="HAMAP" id="MF_01221">
    <property type="entry name" value="UPF0210"/>
    <property type="match status" value="1"/>
</dbReference>
<dbReference type="InterPro" id="IPR007841">
    <property type="entry name" value="UPF0210"/>
</dbReference>
<dbReference type="NCBIfam" id="NF003700">
    <property type="entry name" value="PRK05313.1"/>
    <property type="match status" value="1"/>
</dbReference>
<dbReference type="PANTHER" id="PTHR37560:SF1">
    <property type="entry name" value="UPF0210 PROTEIN MJ1665"/>
    <property type="match status" value="1"/>
</dbReference>
<dbReference type="PANTHER" id="PTHR37560">
    <property type="entry name" value="UPF0210 PROTEIN SPR0218"/>
    <property type="match status" value="1"/>
</dbReference>
<dbReference type="Pfam" id="PF05167">
    <property type="entry name" value="DUF711"/>
    <property type="match status" value="1"/>
</dbReference>
<dbReference type="SUPFAM" id="SSF51998">
    <property type="entry name" value="PFL-like glycyl radical enzymes"/>
    <property type="match status" value="1"/>
</dbReference>
<proteinExistence type="inferred from homology"/>
<reference key="1">
    <citation type="journal article" date="2002" name="J. Mol. Microbiol. Biotechnol.">
        <title>The genome of Methanosarcina mazei: evidence for lateral gene transfer between Bacteria and Archaea.</title>
        <authorList>
            <person name="Deppenmeier U."/>
            <person name="Johann A."/>
            <person name="Hartsch T."/>
            <person name="Merkl R."/>
            <person name="Schmitz R.A."/>
            <person name="Martinez-Arias R."/>
            <person name="Henne A."/>
            <person name="Wiezer A."/>
            <person name="Baeumer S."/>
            <person name="Jacobi C."/>
            <person name="Brueggemann H."/>
            <person name="Lienard T."/>
            <person name="Christmann A."/>
            <person name="Boemecke M."/>
            <person name="Steckel S."/>
            <person name="Bhattacharyya A."/>
            <person name="Lykidis A."/>
            <person name="Overbeek R."/>
            <person name="Klenk H.-P."/>
            <person name="Gunsalus R.P."/>
            <person name="Fritz H.-J."/>
            <person name="Gottschalk G."/>
        </authorList>
    </citation>
    <scope>NUCLEOTIDE SEQUENCE [LARGE SCALE GENOMIC DNA]</scope>
    <source>
        <strain>ATCC BAA-159 / DSM 3647 / Goe1 / Go1 / JCM 11833 / OCM 88</strain>
    </source>
</reference>
<comment type="similarity">
    <text evidence="1">Belongs to the UPF0210 family.</text>
</comment>
<name>Y081_METMA</name>
<organism>
    <name type="scientific">Methanosarcina mazei (strain ATCC BAA-159 / DSM 3647 / Goe1 / Go1 / JCM 11833 / OCM 88)</name>
    <name type="common">Methanosarcina frisia</name>
    <dbReference type="NCBI Taxonomy" id="192952"/>
    <lineage>
        <taxon>Archaea</taxon>
        <taxon>Methanobacteriati</taxon>
        <taxon>Methanobacteriota</taxon>
        <taxon>Stenosarchaea group</taxon>
        <taxon>Methanomicrobia</taxon>
        <taxon>Methanosarcinales</taxon>
        <taxon>Methanosarcinaceae</taxon>
        <taxon>Methanosarcina</taxon>
    </lineage>
</organism>
<accession>Q8Q0Q5</accession>
<protein>
    <recommendedName>
        <fullName evidence="1">UPF0210 protein MM_0081</fullName>
    </recommendedName>
</protein>
<evidence type="ECO:0000255" key="1">
    <source>
        <dbReference type="HAMAP-Rule" id="MF_01221"/>
    </source>
</evidence>
<sequence>MLINPKEILETIQMVRMEHLDIRTVTMGISLRDCSHPDIEIFNENIYAKITSRAKDLVRTTNEIQSLYGIPIINRRISVTPIAIAAESCRSRDFVSIAKTMDEAAKEAGVDFIGGFSALVHKGETGGDLKLINSIPEALASTEKVCSSVNVATTKAGINMDAVGLMGKVIKKTAELTSDRDGIGCAKLVVFANAPDDNPFMAGAFHGIGEPECVINVGVSGPGVVNAAVCELENPDLTEISETIKRTAFKITRMGEMVGREVSRRLGVEFGILDLSLAPTPAIGDSVAAILEAMGLERCGAHGTTAALALLNDAVKKGGAMASSSVGGLSGAFIPVSEDAGMIEAVKAGALSLEKLEAMTCVCSVGLDMIAVPGDTPATTLSAIIADEMAIGVINKKTTAVRVIPAPGKEVGDSVEFGGLLGSAPVMPVSNFSSETFIKRGGRIPAPIQSLTN</sequence>